<keyword id="KW-0903">Direct protein sequencing</keyword>
<keyword id="KW-1015">Disulfide bond</keyword>
<keyword id="KW-0959">Myotoxin</keyword>
<keyword id="KW-0964">Secreted</keyword>
<keyword id="KW-0732">Signal</keyword>
<keyword id="KW-0800">Toxin</keyword>
<protein>
    <recommendedName>
        <fullName evidence="4">Basic phospholipase A2 homolog promutoxin</fullName>
        <shortName>svPLA2 homolog</shortName>
    </recommendedName>
</protein>
<organism>
    <name type="scientific">Protobothrops mucrosquamatus</name>
    <name type="common">Taiwan habu</name>
    <name type="synonym">Trimeresurus mucrosquamatus</name>
    <dbReference type="NCBI Taxonomy" id="103944"/>
    <lineage>
        <taxon>Eukaryota</taxon>
        <taxon>Metazoa</taxon>
        <taxon>Chordata</taxon>
        <taxon>Craniata</taxon>
        <taxon>Vertebrata</taxon>
        <taxon>Euteleostomi</taxon>
        <taxon>Lepidosauria</taxon>
        <taxon>Squamata</taxon>
        <taxon>Bifurcata</taxon>
        <taxon>Unidentata</taxon>
        <taxon>Episquamata</taxon>
        <taxon>Toxicofera</taxon>
        <taxon>Serpentes</taxon>
        <taxon>Colubroidea</taxon>
        <taxon>Viperidae</taxon>
        <taxon>Crotalinae</taxon>
        <taxon>Protobothrops</taxon>
    </lineage>
</organism>
<evidence type="ECO:0000250" key="1">
    <source>
        <dbReference type="UniProtKB" id="I6L8L6"/>
    </source>
</evidence>
<evidence type="ECO:0000250" key="2">
    <source>
        <dbReference type="UniProtKB" id="P24605"/>
    </source>
</evidence>
<evidence type="ECO:0000269" key="3">
    <source>
    </source>
</evidence>
<evidence type="ECO:0000303" key="4">
    <source>
    </source>
</evidence>
<evidence type="ECO:0000305" key="5"/>
<evidence type="ECO:0000305" key="6">
    <source>
    </source>
</evidence>
<feature type="signal peptide" evidence="3">
    <location>
        <begin position="1"/>
        <end position="16"/>
    </location>
</feature>
<feature type="chain" id="PRO_0000419213" description="Basic phospholipase A2 homolog promutoxin">
    <location>
        <begin position="17"/>
        <end position="138"/>
    </location>
</feature>
<feature type="region of interest" description="Important for membrane-damaging activities in eukaryotes and bacteria; heparin-binding" evidence="2">
    <location>
        <begin position="122"/>
        <end position="133"/>
    </location>
</feature>
<feature type="site" description="Important residue of the cationic membrane-docking site (MDoS)" evidence="1">
    <location>
        <position position="122"/>
    </location>
</feature>
<feature type="site" description="Important residue of the cationic membrane-docking site (MDoS)" evidence="1">
    <location>
        <position position="125"/>
    </location>
</feature>
<feature type="site" description="Hydrophobic membrane-disruption site (MDiS)" evidence="1">
    <location>
        <position position="128"/>
    </location>
</feature>
<feature type="site" description="Cationic membrane-docking site (MDoS)" evidence="1">
    <location>
        <position position="129"/>
    </location>
</feature>
<feature type="site" description="Hydrophobic membrane-disruption site (MDiS)" evidence="1">
    <location>
        <position position="131"/>
    </location>
</feature>
<feature type="disulfide bond" evidence="2">
    <location>
        <begin position="42"/>
        <end position="132"/>
    </location>
</feature>
<feature type="disulfide bond" evidence="2">
    <location>
        <begin position="44"/>
        <end position="60"/>
    </location>
</feature>
<feature type="disulfide bond" evidence="2">
    <location>
        <begin position="59"/>
        <end position="112"/>
    </location>
</feature>
<feature type="disulfide bond" evidence="2">
    <location>
        <begin position="65"/>
        <end position="138"/>
    </location>
</feature>
<feature type="disulfide bond" evidence="2">
    <location>
        <begin position="66"/>
        <end position="105"/>
    </location>
</feature>
<feature type="disulfide bond" evidence="2">
    <location>
        <begin position="73"/>
        <end position="98"/>
    </location>
</feature>
<feature type="disulfide bond" evidence="2">
    <location>
        <begin position="91"/>
        <end position="103"/>
    </location>
</feature>
<name>PA2HP_PROMU</name>
<comment type="function">
    <text evidence="1 3">Snake venom phospholipase A2 homolog that lacks enzymatic activity. Exhibits potent myotoxicity causing myonecrosis and edema in the gastrocnemius muscle of mice (PubMed:16793192). Is also able to stimulate the release of IL12 (IL12A-IL12B), TNF-alpha (TNF), IL6 and IL1-beta (IL1B) from human monocytes, and induce IL2, TNFalpha and IL6 release from T-cells (PubMed:16793192). A model of myotoxic mechanism has been proposed: an apo Lys49-PLA2 is activated by the entrance of a hydrophobic molecule (e.g. fatty acid) at the hydrophobic channel of the protein leading to a reorientation of a monomer (By similarity). This reorientation causes a transition between 'inactive' to 'active' states, causing alignment of C-terminal and membrane-docking sites (MDoS) side-by-side and putting the membrane-disruption sites (MDiS) in the same plane, exposed to solvent and in a symmetric position for both monomers (By similarity). The MDoS region stabilizes the toxin on membrane by the interaction of charged residues with phospholipid head groups (By similarity). Subsequently, the MDiS region destabilizes the membrane with penetration of hydrophobic residues (By similarity). This insertion causes a disorganization of the membrane, allowing an uncontrolled influx of ions (i.e. calcium and sodium), and eventually triggering irreversible intracellular alterations and cell death (By similarity).</text>
</comment>
<comment type="subunit">
    <text evidence="1 3">Homodimer; non-covalently linked.</text>
</comment>
<comment type="subcellular location">
    <subcellularLocation>
        <location evidence="3">Secreted</location>
    </subcellularLocation>
</comment>
<comment type="tissue specificity">
    <text evidence="6">Expressed by the venom gland.</text>
</comment>
<comment type="mass spectrometry" mass="13656.0" method="MALDI" evidence="3"/>
<comment type="miscellaneous">
    <text evidence="6">Negative results: fails to induce platelet aggregation, and has little effect on the ADP-induced platelet aggregation. Does not show hemorrhagic activity (PubMed:16793192).</text>
</comment>
<comment type="similarity">
    <text evidence="5">Belongs to the phospholipase A2 family. Group II subfamily. R49 sub-subfamily.</text>
</comment>
<comment type="caution">
    <text evidence="5">Does not bind calcium as one of the calcium-binding sites is lost (Asp-&gt;Arg in position 64, which corresponds to 'Arg-49' in the current nomenclature).</text>
</comment>
<dbReference type="EMBL" id="DQ299948">
    <property type="protein sequence ID" value="ABC02868.1"/>
    <property type="molecule type" value="mRNA"/>
</dbReference>
<dbReference type="SMR" id="Q2PWA3"/>
<dbReference type="GO" id="GO:0005576">
    <property type="term" value="C:extracellular region"/>
    <property type="evidence" value="ECO:0007669"/>
    <property type="project" value="UniProtKB-SubCell"/>
</dbReference>
<dbReference type="GO" id="GO:0005509">
    <property type="term" value="F:calcium ion binding"/>
    <property type="evidence" value="ECO:0007669"/>
    <property type="project" value="InterPro"/>
</dbReference>
<dbReference type="GO" id="GO:0047498">
    <property type="term" value="F:calcium-dependent phospholipase A2 activity"/>
    <property type="evidence" value="ECO:0007669"/>
    <property type="project" value="TreeGrafter"/>
</dbReference>
<dbReference type="GO" id="GO:0005543">
    <property type="term" value="F:phospholipid binding"/>
    <property type="evidence" value="ECO:0007669"/>
    <property type="project" value="TreeGrafter"/>
</dbReference>
<dbReference type="GO" id="GO:0090729">
    <property type="term" value="F:toxin activity"/>
    <property type="evidence" value="ECO:0007669"/>
    <property type="project" value="UniProtKB-KW"/>
</dbReference>
<dbReference type="GO" id="GO:0050482">
    <property type="term" value="P:arachidonate secretion"/>
    <property type="evidence" value="ECO:0007669"/>
    <property type="project" value="InterPro"/>
</dbReference>
<dbReference type="GO" id="GO:0016042">
    <property type="term" value="P:lipid catabolic process"/>
    <property type="evidence" value="ECO:0007669"/>
    <property type="project" value="InterPro"/>
</dbReference>
<dbReference type="GO" id="GO:0006644">
    <property type="term" value="P:phospholipid metabolic process"/>
    <property type="evidence" value="ECO:0007669"/>
    <property type="project" value="InterPro"/>
</dbReference>
<dbReference type="CDD" id="cd00125">
    <property type="entry name" value="PLA2c"/>
    <property type="match status" value="1"/>
</dbReference>
<dbReference type="FunFam" id="1.20.90.10:FF:000001">
    <property type="entry name" value="Basic phospholipase A2 homolog"/>
    <property type="match status" value="1"/>
</dbReference>
<dbReference type="Gene3D" id="1.20.90.10">
    <property type="entry name" value="Phospholipase A2 domain"/>
    <property type="match status" value="1"/>
</dbReference>
<dbReference type="InterPro" id="IPR001211">
    <property type="entry name" value="PLipase_A2"/>
</dbReference>
<dbReference type="InterPro" id="IPR033112">
    <property type="entry name" value="PLipase_A2_Asp_AS"/>
</dbReference>
<dbReference type="InterPro" id="IPR016090">
    <property type="entry name" value="PLipase_A2_dom"/>
</dbReference>
<dbReference type="InterPro" id="IPR036444">
    <property type="entry name" value="PLipase_A2_dom_sf"/>
</dbReference>
<dbReference type="InterPro" id="IPR033113">
    <property type="entry name" value="PLipase_A2_His_AS"/>
</dbReference>
<dbReference type="PANTHER" id="PTHR11716:SF101">
    <property type="entry name" value="BASIC PHOSPHOLIPASE A2 PA-11-LIKE"/>
    <property type="match status" value="1"/>
</dbReference>
<dbReference type="PANTHER" id="PTHR11716">
    <property type="entry name" value="PHOSPHOLIPASE A2 FAMILY MEMBER"/>
    <property type="match status" value="1"/>
</dbReference>
<dbReference type="Pfam" id="PF00068">
    <property type="entry name" value="Phospholip_A2_1"/>
    <property type="match status" value="1"/>
</dbReference>
<dbReference type="PRINTS" id="PR00389">
    <property type="entry name" value="PHPHLIPASEA2"/>
</dbReference>
<dbReference type="SMART" id="SM00085">
    <property type="entry name" value="PA2c"/>
    <property type="match status" value="1"/>
</dbReference>
<dbReference type="SUPFAM" id="SSF48619">
    <property type="entry name" value="Phospholipase A2, PLA2"/>
    <property type="match status" value="1"/>
</dbReference>
<dbReference type="PROSITE" id="PS00119">
    <property type="entry name" value="PA2_ASP"/>
    <property type="match status" value="1"/>
</dbReference>
<dbReference type="PROSITE" id="PS00118">
    <property type="entry name" value="PA2_HIS"/>
    <property type="match status" value="1"/>
</dbReference>
<accession>Q2PWA3</accession>
<proteinExistence type="evidence at protein level"/>
<sequence length="138" mass="15443">MRTLWIMAVLLLGVEGSVIELGKMVFQETGKNPVKNYGLYGCNCGVGKRGKPVDATDSCCFVHRCCYKKVTGCDPKKDRYSYSWENKAIVCGEKNPPCLKQVCECDKAVAICLRENLGTYDKKHRVTMKFLCKAPESC</sequence>
<reference key="1">
    <citation type="journal article" date="2006" name="Biochimie">
        <title>Purification, characterization and cytokine release function of a novel Arg-49 phospholipase A(2) from the venom of Protobothrops mucrosquamatus.</title>
        <authorList>
            <person name="Wei J.-F."/>
            <person name="Li T."/>
            <person name="Wei X.-L."/>
            <person name="Sun Q.-Y."/>
            <person name="Yang F.-M."/>
            <person name="Chen Q.-Y."/>
            <person name="Wang W.-Y."/>
            <person name="Xiong Y.-L."/>
            <person name="He S.-H."/>
        </authorList>
    </citation>
    <scope>NUCLEOTIDE SEQUENCE [MRNA]</scope>
    <scope>PROTEIN SEQUENCE OF 17-46</scope>
    <scope>FUNCTION</scope>
    <scope>SUBUNIT</scope>
    <scope>MASS SPECTROMETRY</scope>
    <scope>SUBCELLULAR LOCATION</scope>
    <source>
        <tissue>Venom</tissue>
        <tissue>Venom gland</tissue>
    </source>
</reference>